<gene>
    <name type="primary">MCRIP2</name>
    <name type="synonym">FAM195A</name>
</gene>
<comment type="subunit">
    <text evidence="1">Interacts with DDX6. Interacts with MCRIP1.</text>
</comment>
<comment type="subcellular location">
    <subcellularLocation>
        <location evidence="1">Cytoplasm</location>
        <location evidence="1">Stress granule</location>
    </subcellularLocation>
    <subcellularLocation>
        <location evidence="1">Nucleus</location>
    </subcellularLocation>
</comment>
<comment type="similarity">
    <text evidence="3">Belongs to the MCRIP family.</text>
</comment>
<keyword id="KW-0007">Acetylation</keyword>
<keyword id="KW-0963">Cytoplasm</keyword>
<keyword id="KW-0488">Methylation</keyword>
<keyword id="KW-0539">Nucleus</keyword>
<keyword id="KW-0597">Phosphoprotein</keyword>
<keyword id="KW-1185">Reference proteome</keyword>
<dbReference type="EMBL" id="BC122777">
    <property type="protein sequence ID" value="AAI22778.1"/>
    <property type="molecule type" value="mRNA"/>
</dbReference>
<dbReference type="RefSeq" id="NP_001072979.1">
    <property type="nucleotide sequence ID" value="NM_001079511.2"/>
</dbReference>
<dbReference type="FunCoup" id="Q0II70">
    <property type="interactions" value="502"/>
</dbReference>
<dbReference type="PaxDb" id="9913-ENSBTAP00000003640"/>
<dbReference type="GeneID" id="618020"/>
<dbReference type="KEGG" id="bta:618020"/>
<dbReference type="CTD" id="84331"/>
<dbReference type="VEuPathDB" id="HostDB:ENSBTAG00000045857"/>
<dbReference type="eggNOG" id="ENOG502RZDA">
    <property type="taxonomic scope" value="Eukaryota"/>
</dbReference>
<dbReference type="InParanoid" id="Q0II70"/>
<dbReference type="OrthoDB" id="9983138at2759"/>
<dbReference type="Proteomes" id="UP000009136">
    <property type="component" value="Chromosome 25"/>
</dbReference>
<dbReference type="Bgee" id="ENSBTAG00000045857">
    <property type="expression patterns" value="Expressed in laryngeal cartilage and 109 other cell types or tissues"/>
</dbReference>
<dbReference type="GO" id="GO:0005737">
    <property type="term" value="C:cytoplasm"/>
    <property type="evidence" value="ECO:0000250"/>
    <property type="project" value="UniProtKB"/>
</dbReference>
<dbReference type="GO" id="GO:0010494">
    <property type="term" value="C:cytoplasmic stress granule"/>
    <property type="evidence" value="ECO:0000250"/>
    <property type="project" value="UniProtKB"/>
</dbReference>
<dbReference type="GO" id="GO:0005634">
    <property type="term" value="C:nucleus"/>
    <property type="evidence" value="ECO:0000250"/>
    <property type="project" value="UniProtKB"/>
</dbReference>
<dbReference type="InterPro" id="IPR029428">
    <property type="entry name" value="MCRIP"/>
</dbReference>
<dbReference type="Pfam" id="PF14799">
    <property type="entry name" value="FAM195"/>
    <property type="match status" value="1"/>
</dbReference>
<accession>Q0II70</accession>
<feature type="chain" id="PRO_0000274327" description="MAPK regulated corepressor interacting protein 2">
    <location>
        <begin position="1"/>
        <end position="155"/>
    </location>
</feature>
<feature type="region of interest" description="Disordered" evidence="2">
    <location>
        <begin position="1"/>
        <end position="59"/>
    </location>
</feature>
<feature type="compositionally biased region" description="Pro residues" evidence="2">
    <location>
        <begin position="46"/>
        <end position="56"/>
    </location>
</feature>
<feature type="modified residue" description="N-acetylmethionine" evidence="1">
    <location>
        <position position="1"/>
    </location>
</feature>
<feature type="modified residue" description="Omega-N-methylarginine" evidence="1">
    <location>
        <position position="35"/>
    </location>
</feature>
<feature type="modified residue" description="Phosphoserine" evidence="1">
    <location>
        <position position="56"/>
    </location>
</feature>
<feature type="modified residue" description="Omega-N-methylarginine" evidence="1">
    <location>
        <position position="60"/>
    </location>
</feature>
<feature type="modified residue" description="Phosphoserine" evidence="1">
    <location>
        <position position="77"/>
    </location>
</feature>
<protein>
    <recommendedName>
        <fullName>MAPK regulated corepressor interacting protein 2</fullName>
    </recommendedName>
    <alternativeName>
        <fullName>Protein FAM195A</fullName>
    </alternativeName>
</protein>
<name>MCRI2_BOVIN</name>
<organism>
    <name type="scientific">Bos taurus</name>
    <name type="common">Bovine</name>
    <dbReference type="NCBI Taxonomy" id="9913"/>
    <lineage>
        <taxon>Eukaryota</taxon>
        <taxon>Metazoa</taxon>
        <taxon>Chordata</taxon>
        <taxon>Craniata</taxon>
        <taxon>Vertebrata</taxon>
        <taxon>Euteleostomi</taxon>
        <taxon>Mammalia</taxon>
        <taxon>Eutheria</taxon>
        <taxon>Laurasiatheria</taxon>
        <taxon>Artiodactyla</taxon>
        <taxon>Ruminantia</taxon>
        <taxon>Pecora</taxon>
        <taxon>Bovidae</taxon>
        <taxon>Bovinae</taxon>
        <taxon>Bos</taxon>
    </lineage>
</organism>
<evidence type="ECO:0000250" key="1">
    <source>
        <dbReference type="UniProtKB" id="Q9BUT9"/>
    </source>
</evidence>
<evidence type="ECO:0000256" key="2">
    <source>
        <dbReference type="SAM" id="MobiDB-lite"/>
    </source>
</evidence>
<evidence type="ECO:0000305" key="3"/>
<reference key="1">
    <citation type="submission" date="2006-08" db="EMBL/GenBank/DDBJ databases">
        <authorList>
            <consortium name="NIH - Mammalian Gene Collection (MGC) project"/>
        </authorList>
    </citation>
    <scope>NUCLEOTIDE SEQUENCE [LARGE SCALE MRNA]</scope>
    <source>
        <strain>Crossbred X Angus</strain>
        <tissue>Ileum</tissue>
    </source>
</reference>
<sequence>MYTITKGPSKLVAQRRTGPTQQQVESRLGELLKCRHSAPTPQHPRAQPPGPWPLSSPGPRLVFNRVNGRRPPATSPSLEGTQEPYTLAHEENVRFVSEAWQQVEQQLGGGPAGESGPRPVQYVERTPNPRLQNFVPIDLDEWWAQQFLARITSCS</sequence>
<proteinExistence type="evidence at transcript level"/>